<evidence type="ECO:0000255" key="1">
    <source>
        <dbReference type="HAMAP-Rule" id="MF_00017"/>
    </source>
</evidence>
<accession>Q82EQ7</accession>
<comment type="function">
    <text evidence="1">May play a role in DNA repair. It seems to be involved in an RecBC-independent recombinational process of DNA repair. It may act with RecF and RecO.</text>
</comment>
<comment type="similarity">
    <text evidence="1">Belongs to the RecR family.</text>
</comment>
<gene>
    <name evidence="1" type="primary">recR</name>
    <name type="ordered locus">SAV_4557</name>
</gene>
<proteinExistence type="inferred from homology"/>
<reference key="1">
    <citation type="journal article" date="2001" name="Proc. Natl. Acad. Sci. U.S.A.">
        <title>Genome sequence of an industrial microorganism Streptomyces avermitilis: deducing the ability of producing secondary metabolites.</title>
        <authorList>
            <person name="Omura S."/>
            <person name="Ikeda H."/>
            <person name="Ishikawa J."/>
            <person name="Hanamoto A."/>
            <person name="Takahashi C."/>
            <person name="Shinose M."/>
            <person name="Takahashi Y."/>
            <person name="Horikawa H."/>
            <person name="Nakazawa H."/>
            <person name="Osonoe T."/>
            <person name="Kikuchi H."/>
            <person name="Shiba T."/>
            <person name="Sakaki Y."/>
            <person name="Hattori M."/>
        </authorList>
    </citation>
    <scope>NUCLEOTIDE SEQUENCE [LARGE SCALE GENOMIC DNA]</scope>
    <source>
        <strain>ATCC 31267 / DSM 46492 / JCM 5070 / NBRC 14893 / NCIMB 12804 / NRRL 8165 / MA-4680</strain>
    </source>
</reference>
<reference key="2">
    <citation type="journal article" date="2003" name="Nat. Biotechnol.">
        <title>Complete genome sequence and comparative analysis of the industrial microorganism Streptomyces avermitilis.</title>
        <authorList>
            <person name="Ikeda H."/>
            <person name="Ishikawa J."/>
            <person name="Hanamoto A."/>
            <person name="Shinose M."/>
            <person name="Kikuchi H."/>
            <person name="Shiba T."/>
            <person name="Sakaki Y."/>
            <person name="Hattori M."/>
            <person name="Omura S."/>
        </authorList>
    </citation>
    <scope>NUCLEOTIDE SEQUENCE [LARGE SCALE GENOMIC DNA]</scope>
    <source>
        <strain>ATCC 31267 / DSM 46492 / JCM 5070 / NBRC 14893 / NCIMB 12804 / NRRL 8165 / MA-4680</strain>
    </source>
</reference>
<name>RECR_STRAW</name>
<organism>
    <name type="scientific">Streptomyces avermitilis (strain ATCC 31267 / DSM 46492 / JCM 5070 / NBRC 14893 / NCIMB 12804 / NRRL 8165 / MA-4680)</name>
    <dbReference type="NCBI Taxonomy" id="227882"/>
    <lineage>
        <taxon>Bacteria</taxon>
        <taxon>Bacillati</taxon>
        <taxon>Actinomycetota</taxon>
        <taxon>Actinomycetes</taxon>
        <taxon>Kitasatosporales</taxon>
        <taxon>Streptomycetaceae</taxon>
        <taxon>Streptomyces</taxon>
    </lineage>
</organism>
<protein>
    <recommendedName>
        <fullName evidence="1">Recombination protein RecR</fullName>
    </recommendedName>
</protein>
<dbReference type="EMBL" id="BA000030">
    <property type="protein sequence ID" value="BAC72269.1"/>
    <property type="molecule type" value="Genomic_DNA"/>
</dbReference>
<dbReference type="RefSeq" id="WP_007383602.1">
    <property type="nucleotide sequence ID" value="NZ_JZJK01000062.1"/>
</dbReference>
<dbReference type="SMR" id="Q82EQ7"/>
<dbReference type="GeneID" id="95699244"/>
<dbReference type="KEGG" id="sma:SAVERM_4557"/>
<dbReference type="eggNOG" id="COG0353">
    <property type="taxonomic scope" value="Bacteria"/>
</dbReference>
<dbReference type="HOGENOM" id="CLU_060739_1_0_11"/>
<dbReference type="OrthoDB" id="9802672at2"/>
<dbReference type="Proteomes" id="UP000000428">
    <property type="component" value="Chromosome"/>
</dbReference>
<dbReference type="GO" id="GO:0003677">
    <property type="term" value="F:DNA binding"/>
    <property type="evidence" value="ECO:0007669"/>
    <property type="project" value="UniProtKB-UniRule"/>
</dbReference>
<dbReference type="GO" id="GO:0008270">
    <property type="term" value="F:zinc ion binding"/>
    <property type="evidence" value="ECO:0007669"/>
    <property type="project" value="UniProtKB-KW"/>
</dbReference>
<dbReference type="GO" id="GO:0006310">
    <property type="term" value="P:DNA recombination"/>
    <property type="evidence" value="ECO:0007669"/>
    <property type="project" value="UniProtKB-UniRule"/>
</dbReference>
<dbReference type="GO" id="GO:0006281">
    <property type="term" value="P:DNA repair"/>
    <property type="evidence" value="ECO:0007669"/>
    <property type="project" value="UniProtKB-UniRule"/>
</dbReference>
<dbReference type="CDD" id="cd01025">
    <property type="entry name" value="TOPRIM_recR"/>
    <property type="match status" value="1"/>
</dbReference>
<dbReference type="Gene3D" id="3.30.60.80">
    <property type="match status" value="1"/>
</dbReference>
<dbReference type="Gene3D" id="3.40.1360.10">
    <property type="match status" value="1"/>
</dbReference>
<dbReference type="Gene3D" id="6.10.250.240">
    <property type="match status" value="1"/>
</dbReference>
<dbReference type="Gene3D" id="1.10.8.420">
    <property type="entry name" value="RecR Domain 1"/>
    <property type="match status" value="1"/>
</dbReference>
<dbReference type="HAMAP" id="MF_00017">
    <property type="entry name" value="RecR"/>
    <property type="match status" value="1"/>
</dbReference>
<dbReference type="InterPro" id="IPR000093">
    <property type="entry name" value="DNA_Rcmb_RecR"/>
</dbReference>
<dbReference type="InterPro" id="IPR023627">
    <property type="entry name" value="Rcmb_RecR"/>
</dbReference>
<dbReference type="InterPro" id="IPR015967">
    <property type="entry name" value="Rcmb_RecR_Znf"/>
</dbReference>
<dbReference type="InterPro" id="IPR006171">
    <property type="entry name" value="TOPRIM_dom"/>
</dbReference>
<dbReference type="InterPro" id="IPR034137">
    <property type="entry name" value="TOPRIM_RecR"/>
</dbReference>
<dbReference type="NCBIfam" id="TIGR00615">
    <property type="entry name" value="recR"/>
    <property type="match status" value="1"/>
</dbReference>
<dbReference type="PANTHER" id="PTHR30446">
    <property type="entry name" value="RECOMBINATION PROTEIN RECR"/>
    <property type="match status" value="1"/>
</dbReference>
<dbReference type="PANTHER" id="PTHR30446:SF0">
    <property type="entry name" value="RECOMBINATION PROTEIN RECR"/>
    <property type="match status" value="1"/>
</dbReference>
<dbReference type="Pfam" id="PF21175">
    <property type="entry name" value="RecR_C"/>
    <property type="match status" value="1"/>
</dbReference>
<dbReference type="Pfam" id="PF21176">
    <property type="entry name" value="RecR_HhH"/>
    <property type="match status" value="1"/>
</dbReference>
<dbReference type="Pfam" id="PF02132">
    <property type="entry name" value="RecR_ZnF"/>
    <property type="match status" value="1"/>
</dbReference>
<dbReference type="Pfam" id="PF13662">
    <property type="entry name" value="Toprim_4"/>
    <property type="match status" value="1"/>
</dbReference>
<dbReference type="SMART" id="SM00493">
    <property type="entry name" value="TOPRIM"/>
    <property type="match status" value="1"/>
</dbReference>
<dbReference type="SUPFAM" id="SSF111304">
    <property type="entry name" value="Recombination protein RecR"/>
    <property type="match status" value="1"/>
</dbReference>
<dbReference type="PROSITE" id="PS01300">
    <property type="entry name" value="RECR"/>
    <property type="match status" value="1"/>
</dbReference>
<dbReference type="PROSITE" id="PS50880">
    <property type="entry name" value="TOPRIM"/>
    <property type="match status" value="1"/>
</dbReference>
<feature type="chain" id="PRO_0000190395" description="Recombination protein RecR">
    <location>
        <begin position="1"/>
        <end position="199"/>
    </location>
</feature>
<feature type="domain" description="Toprim" evidence="1">
    <location>
        <begin position="79"/>
        <end position="174"/>
    </location>
</feature>
<feature type="zinc finger region" description="C4-type" evidence="1">
    <location>
        <begin position="56"/>
        <end position="71"/>
    </location>
</feature>
<keyword id="KW-0227">DNA damage</keyword>
<keyword id="KW-0233">DNA recombination</keyword>
<keyword id="KW-0234">DNA repair</keyword>
<keyword id="KW-0479">Metal-binding</keyword>
<keyword id="KW-1185">Reference proteome</keyword>
<keyword id="KW-0862">Zinc</keyword>
<keyword id="KW-0863">Zinc-finger</keyword>
<sequence length="199" mass="21826">MYEGVVQDLIDELGRLPGVGPKSAQRIAFHILQAEPTDVRRLAQCLMEVKAKVRFCATCGNVAQEELCNICRDPRRDLSVICVVEEPKDVVAIERTREFRGKYHVLGGAISPIEGVGPDDLRIRELLARLADGTVTELILATDPNLEGEATATYLARMIKPMGLKVTRLASGLPVGGDLEYADEVTLGRAFEGRRLLDV</sequence>